<sequence>MGCFESKPDQQVQPVTVRSPTDIFWLVLYVVFWIALIVIAVFSFIYGNPLRIINGYDSFGNTCGVRSNDKFSNFPLSGMNTEDKPYLFFLDIKELRHTLKICVKECPQRELLNAAELYRYYEDRKTKLCRYDFNMSMLQTQEANQGAKYFDFNGPCPPFPVYQSAPVLHRCIPTGVNAPLQQVKKMYALINSWEATQQVFSDLYKAWPTIVLICALSLVFSIVMIALLHWLATIVSWLICIIVVVASVGITGVLWWSYYKAKHTLDTDQQLSYLEELVRNEATIYVLAIAATCIMIILLVVIYYLREKLTGLAALFEEAGKCMLQLPGLAGPPLLAFLALSVFLAFWVVVVVCLATANYPGVKPLLPLAQLEDSASIANDPKLKPELAGKNDTSFKSFKLVEYHDVNVLRHMLWIYIIGLIWTSEFIFACQQLAIAGAVAFWYFRKPTDSPVLLAIAKLVKYHLGSVAKGSLIITIFKIPRLILTYLYAKLKRHQQEGSECASCCLRCCICSFWLLEKFIRYLNHNAYTVIAIEGVNFCPAAKIAWNALVTNALQVATINGIGDFVLFLGKLAVASICGLISILLLRDNPDLHFYMAPVIIITVFAFFIAHIILSLYEMVVDTLFLCVCEDRTINGNSGRWKESNLARLLGEAPEEDAVEAPMQEVQLTPITKQPFSAQFLQAEMENSKA</sequence>
<comment type="subcellular location">
    <subcellularLocation>
        <location evidence="1">Membrane</location>
        <topology evidence="1">Multi-pass membrane protein</topology>
    </subcellularLocation>
</comment>
<comment type="similarity">
    <text evidence="4">Belongs to the CTL (choline transporter-like) family.</text>
</comment>
<organism>
    <name type="scientific">Anopheles gambiae</name>
    <name type="common">African malaria mosquito</name>
    <dbReference type="NCBI Taxonomy" id="7165"/>
    <lineage>
        <taxon>Eukaryota</taxon>
        <taxon>Metazoa</taxon>
        <taxon>Ecdysozoa</taxon>
        <taxon>Arthropoda</taxon>
        <taxon>Hexapoda</taxon>
        <taxon>Insecta</taxon>
        <taxon>Pterygota</taxon>
        <taxon>Neoptera</taxon>
        <taxon>Endopterygota</taxon>
        <taxon>Diptera</taxon>
        <taxon>Nematocera</taxon>
        <taxon>Culicoidea</taxon>
        <taxon>Culicidae</taxon>
        <taxon>Anophelinae</taxon>
        <taxon>Anopheles</taxon>
    </lineage>
</organism>
<name>CTL1L_ANOGA</name>
<gene>
    <name evidence="2" type="primary">Ctl1</name>
    <name type="ORF">AGAP006244</name>
</gene>
<protein>
    <recommendedName>
        <fullName evidence="2">Choline transporter-like 1</fullName>
    </recommendedName>
</protein>
<dbReference type="EMBL" id="AAAB01008960">
    <property type="protein sequence ID" value="EAA10766.4"/>
    <property type="molecule type" value="Genomic_DNA"/>
</dbReference>
<dbReference type="RefSeq" id="XP_316311.4">
    <property type="nucleotide sequence ID" value="XM_316311.4"/>
</dbReference>
<dbReference type="SMR" id="Q7Q5R7"/>
<dbReference type="FunCoup" id="Q7Q5R7">
    <property type="interactions" value="171"/>
</dbReference>
<dbReference type="GlyCosmos" id="Q7Q5R7">
    <property type="glycosylation" value="2 sites, No reported glycans"/>
</dbReference>
<dbReference type="PaxDb" id="7165-AGAP006244-PA"/>
<dbReference type="EnsemblMetazoa" id="AGAP006244-RA">
    <property type="protein sequence ID" value="AGAP006244-PA"/>
    <property type="gene ID" value="AGAP006244"/>
</dbReference>
<dbReference type="GeneID" id="1276904"/>
<dbReference type="KEGG" id="aga:1276904"/>
<dbReference type="CTD" id="110280"/>
<dbReference type="VEuPathDB" id="VectorBase:AGAMI1_007636"/>
<dbReference type="VEuPathDB" id="VectorBase:AGAP006244"/>
<dbReference type="eggNOG" id="KOG1362">
    <property type="taxonomic scope" value="Eukaryota"/>
</dbReference>
<dbReference type="HOGENOM" id="CLU_017181_2_0_1"/>
<dbReference type="InParanoid" id="Q7Q5R7"/>
<dbReference type="OMA" id="LLGIRYM"/>
<dbReference type="PhylomeDB" id="Q7Q5R7"/>
<dbReference type="Proteomes" id="UP000007062">
    <property type="component" value="Chromosome 2L"/>
</dbReference>
<dbReference type="GO" id="GO:0016020">
    <property type="term" value="C:membrane"/>
    <property type="evidence" value="ECO:0000318"/>
    <property type="project" value="GO_Central"/>
</dbReference>
<dbReference type="GO" id="GO:0022857">
    <property type="term" value="F:transmembrane transporter activity"/>
    <property type="evidence" value="ECO:0000318"/>
    <property type="project" value="GO_Central"/>
</dbReference>
<dbReference type="GO" id="GO:0055085">
    <property type="term" value="P:transmembrane transport"/>
    <property type="evidence" value="ECO:0000318"/>
    <property type="project" value="GO_Central"/>
</dbReference>
<dbReference type="InterPro" id="IPR007603">
    <property type="entry name" value="Choline_transptr-like"/>
</dbReference>
<dbReference type="PANTHER" id="PTHR12385">
    <property type="entry name" value="CHOLINE TRANSPORTER-LIKE (SLC FAMILY 44)"/>
    <property type="match status" value="1"/>
</dbReference>
<dbReference type="PANTHER" id="PTHR12385:SF12">
    <property type="entry name" value="CHOLINE TRANSPORTER-LIKE PROTEIN"/>
    <property type="match status" value="1"/>
</dbReference>
<dbReference type="Pfam" id="PF04515">
    <property type="entry name" value="Choline_transpo"/>
    <property type="match status" value="1"/>
</dbReference>
<accession>Q7Q5R7</accession>
<reference key="1">
    <citation type="journal article" date="2002" name="Science">
        <title>The genome sequence of the malaria mosquito Anopheles gambiae.</title>
        <authorList>
            <person name="Holt R.A."/>
            <person name="Subramanian G.M."/>
            <person name="Halpern A."/>
            <person name="Sutton G.G."/>
            <person name="Charlab R."/>
            <person name="Nusskern D.R."/>
            <person name="Wincker P."/>
            <person name="Clark A.G."/>
            <person name="Ribeiro J.M.C."/>
            <person name="Wides R."/>
            <person name="Salzberg S.L."/>
            <person name="Loftus B.J."/>
            <person name="Yandell M.D."/>
            <person name="Majoros W.H."/>
            <person name="Rusch D.B."/>
            <person name="Lai Z."/>
            <person name="Kraft C.L."/>
            <person name="Abril J.F."/>
            <person name="Anthouard V."/>
            <person name="Arensburger P."/>
            <person name="Atkinson P.W."/>
            <person name="Baden H."/>
            <person name="de Berardinis V."/>
            <person name="Baldwin D."/>
            <person name="Benes V."/>
            <person name="Biedler J."/>
            <person name="Blass C."/>
            <person name="Bolanos R."/>
            <person name="Boscus D."/>
            <person name="Barnstead M."/>
            <person name="Cai S."/>
            <person name="Center A."/>
            <person name="Chaturverdi K."/>
            <person name="Christophides G.K."/>
            <person name="Chrystal M.A.M."/>
            <person name="Clamp M."/>
            <person name="Cravchik A."/>
            <person name="Curwen V."/>
            <person name="Dana A."/>
            <person name="Delcher A."/>
            <person name="Dew I."/>
            <person name="Evans C.A."/>
            <person name="Flanigan M."/>
            <person name="Grundschober-Freimoser A."/>
            <person name="Friedli L."/>
            <person name="Gu Z."/>
            <person name="Guan P."/>
            <person name="Guigo R."/>
            <person name="Hillenmeyer M.E."/>
            <person name="Hladun S.L."/>
            <person name="Hogan J.R."/>
            <person name="Hong Y.S."/>
            <person name="Hoover J."/>
            <person name="Jaillon O."/>
            <person name="Ke Z."/>
            <person name="Kodira C.D."/>
            <person name="Kokoza E."/>
            <person name="Koutsos A."/>
            <person name="Letunic I."/>
            <person name="Levitsky A.A."/>
            <person name="Liang Y."/>
            <person name="Lin J.-J."/>
            <person name="Lobo N.F."/>
            <person name="Lopez J.R."/>
            <person name="Malek J.A."/>
            <person name="McIntosh T.C."/>
            <person name="Meister S."/>
            <person name="Miller J.R."/>
            <person name="Mobarry C."/>
            <person name="Mongin E."/>
            <person name="Murphy S.D."/>
            <person name="O'Brochta D.A."/>
            <person name="Pfannkoch C."/>
            <person name="Qi R."/>
            <person name="Regier M.A."/>
            <person name="Remington K."/>
            <person name="Shao H."/>
            <person name="Sharakhova M.V."/>
            <person name="Sitter C.D."/>
            <person name="Shetty J."/>
            <person name="Smith T.J."/>
            <person name="Strong R."/>
            <person name="Sun J."/>
            <person name="Thomasova D."/>
            <person name="Ton L.Q."/>
            <person name="Topalis P."/>
            <person name="Tu Z.J."/>
            <person name="Unger M.F."/>
            <person name="Walenz B."/>
            <person name="Wang A.H."/>
            <person name="Wang J."/>
            <person name="Wang M."/>
            <person name="Wang X."/>
            <person name="Woodford K.J."/>
            <person name="Wortman J.R."/>
            <person name="Wu M."/>
            <person name="Yao A."/>
            <person name="Zdobnov E.M."/>
            <person name="Zhang H."/>
            <person name="Zhao Q."/>
            <person name="Zhao S."/>
            <person name="Zhu S.C."/>
            <person name="Zhimulev I."/>
            <person name="Coluzzi M."/>
            <person name="della Torre A."/>
            <person name="Roth C.W."/>
            <person name="Louis C."/>
            <person name="Kalush F."/>
            <person name="Mural R.J."/>
            <person name="Myers E.W."/>
            <person name="Adams M.D."/>
            <person name="Smith H.O."/>
            <person name="Broder S."/>
            <person name="Gardner M.J."/>
            <person name="Fraser C.M."/>
            <person name="Birney E."/>
            <person name="Bork P."/>
            <person name="Brey P.T."/>
            <person name="Venter J.C."/>
            <person name="Weissenbach J."/>
            <person name="Kafatos F.C."/>
            <person name="Collins F.H."/>
            <person name="Hoffman S.L."/>
        </authorList>
    </citation>
    <scope>NUCLEOTIDE SEQUENCE [LARGE SCALE GENOMIC DNA]</scope>
    <source>
        <strain>PEST</strain>
    </source>
</reference>
<keyword id="KW-0325">Glycoprotein</keyword>
<keyword id="KW-0472">Membrane</keyword>
<keyword id="KW-1185">Reference proteome</keyword>
<keyword id="KW-0812">Transmembrane</keyword>
<keyword id="KW-1133">Transmembrane helix</keyword>
<proteinExistence type="inferred from homology"/>
<evidence type="ECO:0000250" key="1"/>
<evidence type="ECO:0000250" key="2">
    <source>
        <dbReference type="UniProtKB" id="Q9VZE7"/>
    </source>
</evidence>
<evidence type="ECO:0000255" key="3"/>
<evidence type="ECO:0000305" key="4"/>
<feature type="chain" id="PRO_0000359730" description="Choline transporter-like 1">
    <location>
        <begin position="1"/>
        <end position="690"/>
    </location>
</feature>
<feature type="transmembrane region" description="Helical" evidence="3">
    <location>
        <begin position="23"/>
        <end position="43"/>
    </location>
</feature>
<feature type="transmembrane region" description="Helical" evidence="3">
    <location>
        <begin position="203"/>
        <end position="223"/>
    </location>
</feature>
<feature type="transmembrane region" description="Helical" evidence="3">
    <location>
        <begin position="237"/>
        <end position="259"/>
    </location>
</feature>
<feature type="transmembrane region" description="Helical" evidence="3">
    <location>
        <begin position="282"/>
        <end position="302"/>
    </location>
</feature>
<feature type="transmembrane region" description="Helical" evidence="3">
    <location>
        <begin position="334"/>
        <end position="354"/>
    </location>
</feature>
<feature type="transmembrane region" description="Helical" evidence="3">
    <location>
        <begin position="415"/>
        <end position="435"/>
    </location>
</feature>
<feature type="transmembrane region" description="Helical" evidence="3">
    <location>
        <begin position="464"/>
        <end position="484"/>
    </location>
</feature>
<feature type="transmembrane region" description="Helical" evidence="3">
    <location>
        <begin position="565"/>
        <end position="585"/>
    </location>
</feature>
<feature type="transmembrane region" description="Helical" evidence="3">
    <location>
        <begin position="594"/>
        <end position="614"/>
    </location>
</feature>
<feature type="glycosylation site" description="N-linked (GlcNAc...) asparagine" evidence="3">
    <location>
        <position position="134"/>
    </location>
</feature>
<feature type="glycosylation site" description="N-linked (GlcNAc...) asparagine" evidence="3">
    <location>
        <position position="391"/>
    </location>
</feature>